<comment type="similarity">
    <text evidence="1">Belongs to the bacterial ribosomal protein bL35 family.</text>
</comment>
<name>RL35_SHESM</name>
<feature type="chain" id="PRO_1000050767" description="Large ribosomal subunit protein bL35">
    <location>
        <begin position="1"/>
        <end position="64"/>
    </location>
</feature>
<reference key="1">
    <citation type="submission" date="2006-08" db="EMBL/GenBank/DDBJ databases">
        <title>Complete sequence of Shewanella sp. MR-4.</title>
        <authorList>
            <consortium name="US DOE Joint Genome Institute"/>
            <person name="Copeland A."/>
            <person name="Lucas S."/>
            <person name="Lapidus A."/>
            <person name="Barry K."/>
            <person name="Detter J.C."/>
            <person name="Glavina del Rio T."/>
            <person name="Hammon N."/>
            <person name="Israni S."/>
            <person name="Dalin E."/>
            <person name="Tice H."/>
            <person name="Pitluck S."/>
            <person name="Kiss H."/>
            <person name="Brettin T."/>
            <person name="Bruce D."/>
            <person name="Han C."/>
            <person name="Tapia R."/>
            <person name="Gilna P."/>
            <person name="Schmutz J."/>
            <person name="Larimer F."/>
            <person name="Land M."/>
            <person name="Hauser L."/>
            <person name="Kyrpides N."/>
            <person name="Mikhailova N."/>
            <person name="Nealson K."/>
            <person name="Konstantinidis K."/>
            <person name="Klappenbach J."/>
            <person name="Tiedje J."/>
            <person name="Richardson P."/>
        </authorList>
    </citation>
    <scope>NUCLEOTIDE SEQUENCE [LARGE SCALE GENOMIC DNA]</scope>
    <source>
        <strain>MR-4</strain>
    </source>
</reference>
<evidence type="ECO:0000255" key="1">
    <source>
        <dbReference type="HAMAP-Rule" id="MF_00514"/>
    </source>
</evidence>
<evidence type="ECO:0000305" key="2"/>
<sequence length="64" mass="7466">MPKMKTDRGVAKRFKKTANGFKRKQAHLRHILTKKSTKRKRHLRNKCLVAKVDVPAIARQLPYA</sequence>
<gene>
    <name evidence="1" type="primary">rpmI</name>
    <name type="ordered locus">Shewmr4_1957</name>
</gene>
<protein>
    <recommendedName>
        <fullName evidence="1">Large ribosomal subunit protein bL35</fullName>
    </recommendedName>
    <alternativeName>
        <fullName evidence="2">50S ribosomal protein L35</fullName>
    </alternativeName>
</protein>
<keyword id="KW-0687">Ribonucleoprotein</keyword>
<keyword id="KW-0689">Ribosomal protein</keyword>
<organism>
    <name type="scientific">Shewanella sp. (strain MR-4)</name>
    <dbReference type="NCBI Taxonomy" id="60480"/>
    <lineage>
        <taxon>Bacteria</taxon>
        <taxon>Pseudomonadati</taxon>
        <taxon>Pseudomonadota</taxon>
        <taxon>Gammaproteobacteria</taxon>
        <taxon>Alteromonadales</taxon>
        <taxon>Shewanellaceae</taxon>
        <taxon>Shewanella</taxon>
    </lineage>
</organism>
<proteinExistence type="inferred from homology"/>
<accession>Q0HIT7</accession>
<dbReference type="EMBL" id="CP000446">
    <property type="protein sequence ID" value="ABI39030.1"/>
    <property type="molecule type" value="Genomic_DNA"/>
</dbReference>
<dbReference type="RefSeq" id="WP_011072303.1">
    <property type="nucleotide sequence ID" value="NC_008321.1"/>
</dbReference>
<dbReference type="SMR" id="Q0HIT7"/>
<dbReference type="GeneID" id="94727989"/>
<dbReference type="KEGG" id="she:Shewmr4_1957"/>
<dbReference type="HOGENOM" id="CLU_169643_1_1_6"/>
<dbReference type="GO" id="GO:0022625">
    <property type="term" value="C:cytosolic large ribosomal subunit"/>
    <property type="evidence" value="ECO:0007669"/>
    <property type="project" value="TreeGrafter"/>
</dbReference>
<dbReference type="GO" id="GO:0003735">
    <property type="term" value="F:structural constituent of ribosome"/>
    <property type="evidence" value="ECO:0007669"/>
    <property type="project" value="InterPro"/>
</dbReference>
<dbReference type="GO" id="GO:0006412">
    <property type="term" value="P:translation"/>
    <property type="evidence" value="ECO:0007669"/>
    <property type="project" value="UniProtKB-UniRule"/>
</dbReference>
<dbReference type="FunFam" id="4.10.410.60:FF:000001">
    <property type="entry name" value="50S ribosomal protein L35"/>
    <property type="match status" value="1"/>
</dbReference>
<dbReference type="Gene3D" id="4.10.410.60">
    <property type="match status" value="1"/>
</dbReference>
<dbReference type="HAMAP" id="MF_00514">
    <property type="entry name" value="Ribosomal_bL35"/>
    <property type="match status" value="1"/>
</dbReference>
<dbReference type="InterPro" id="IPR001706">
    <property type="entry name" value="Ribosomal_bL35"/>
</dbReference>
<dbReference type="InterPro" id="IPR021137">
    <property type="entry name" value="Ribosomal_bL35-like"/>
</dbReference>
<dbReference type="InterPro" id="IPR018265">
    <property type="entry name" value="Ribosomal_bL35_CS"/>
</dbReference>
<dbReference type="InterPro" id="IPR037229">
    <property type="entry name" value="Ribosomal_bL35_sf"/>
</dbReference>
<dbReference type="NCBIfam" id="TIGR00001">
    <property type="entry name" value="rpmI_bact"/>
    <property type="match status" value="1"/>
</dbReference>
<dbReference type="PANTHER" id="PTHR33343">
    <property type="entry name" value="54S RIBOSOMAL PROTEIN BL35M"/>
    <property type="match status" value="1"/>
</dbReference>
<dbReference type="PANTHER" id="PTHR33343:SF1">
    <property type="entry name" value="LARGE RIBOSOMAL SUBUNIT PROTEIN BL35M"/>
    <property type="match status" value="1"/>
</dbReference>
<dbReference type="Pfam" id="PF01632">
    <property type="entry name" value="Ribosomal_L35p"/>
    <property type="match status" value="1"/>
</dbReference>
<dbReference type="PRINTS" id="PR00064">
    <property type="entry name" value="RIBOSOMALL35"/>
</dbReference>
<dbReference type="SUPFAM" id="SSF143034">
    <property type="entry name" value="L35p-like"/>
    <property type="match status" value="1"/>
</dbReference>
<dbReference type="PROSITE" id="PS00936">
    <property type="entry name" value="RIBOSOMAL_L35"/>
    <property type="match status" value="1"/>
</dbReference>